<protein>
    <recommendedName>
        <fullName evidence="1">Nuclear export protein</fullName>
        <shortName evidence="1">NEP</shortName>
    </recommendedName>
    <alternativeName>
        <fullName evidence="1">Non-structural protein 2</fullName>
        <shortName evidence="1">NS2</shortName>
    </alternativeName>
</protein>
<accession>A4GCM4</accession>
<organismHost>
    <name type="scientific">Aves</name>
    <dbReference type="NCBI Taxonomy" id="8782"/>
</organismHost>
<organismHost>
    <name type="scientific">Homo sapiens</name>
    <name type="common">Human</name>
    <dbReference type="NCBI Taxonomy" id="9606"/>
</organismHost>
<organismHost>
    <name type="scientific">Sus scrofa</name>
    <name type="common">Pig</name>
    <dbReference type="NCBI Taxonomy" id="9823"/>
</organismHost>
<name>NEP_I35A3</name>
<evidence type="ECO:0000255" key="1">
    <source>
        <dbReference type="HAMAP-Rule" id="MF_04067"/>
    </source>
</evidence>
<dbReference type="EMBL" id="CY020473">
    <property type="protein sequence ID" value="ABO38390.1"/>
    <property type="molecule type" value="Viral_cRNA"/>
</dbReference>
<dbReference type="SMR" id="A4GCM4"/>
<dbReference type="Proteomes" id="UP000000829">
    <property type="component" value="Genome"/>
</dbReference>
<dbReference type="GO" id="GO:0042025">
    <property type="term" value="C:host cell nucleus"/>
    <property type="evidence" value="ECO:0007669"/>
    <property type="project" value="UniProtKB-SubCell"/>
</dbReference>
<dbReference type="GO" id="GO:0044423">
    <property type="term" value="C:virion component"/>
    <property type="evidence" value="ECO:0007669"/>
    <property type="project" value="UniProtKB-UniRule"/>
</dbReference>
<dbReference type="GO" id="GO:0039675">
    <property type="term" value="P:exit of virus from host cell nucleus through nuclear pore"/>
    <property type="evidence" value="ECO:0007669"/>
    <property type="project" value="UniProtKB-UniRule"/>
</dbReference>
<dbReference type="Gene3D" id="1.10.287.230">
    <property type="match status" value="1"/>
</dbReference>
<dbReference type="Gene3D" id="1.10.287.10">
    <property type="entry name" value="S15/NS1, RNA-binding"/>
    <property type="match status" value="1"/>
</dbReference>
<dbReference type="HAMAP" id="MF_04067">
    <property type="entry name" value="INFV_NEP"/>
    <property type="match status" value="1"/>
</dbReference>
<dbReference type="InterPro" id="IPR000968">
    <property type="entry name" value="Flu_NS2"/>
</dbReference>
<dbReference type="Pfam" id="PF00601">
    <property type="entry name" value="Flu_NS2"/>
    <property type="match status" value="1"/>
</dbReference>
<dbReference type="SUPFAM" id="SSF101156">
    <property type="entry name" value="Nonstructural protein ns2, Nep, M1-binding domain"/>
    <property type="match status" value="1"/>
</dbReference>
<organism>
    <name type="scientific">Influenza A virus (strain A/USA:Phila/1935 H1N1)</name>
    <dbReference type="NCBI Taxonomy" id="425570"/>
    <lineage>
        <taxon>Viruses</taxon>
        <taxon>Riboviria</taxon>
        <taxon>Orthornavirae</taxon>
        <taxon>Negarnaviricota</taxon>
        <taxon>Polyploviricotina</taxon>
        <taxon>Insthoviricetes</taxon>
        <taxon>Articulavirales</taxon>
        <taxon>Orthomyxoviridae</taxon>
        <taxon>Alphainfluenzavirus</taxon>
        <taxon>Alphainfluenzavirus influenzae</taxon>
        <taxon>Influenza A virus</taxon>
    </lineage>
</organism>
<proteinExistence type="inferred from homology"/>
<reference key="1">
    <citation type="submission" date="2007-03" db="EMBL/GenBank/DDBJ databases">
        <title>The NIAID influenza genome sequencing project.</title>
        <authorList>
            <person name="Ghedin E."/>
            <person name="Spiro D."/>
            <person name="Miller N."/>
            <person name="Zaborsky J."/>
            <person name="Feldblyum T."/>
            <person name="Subbu V."/>
            <person name="Shumway M."/>
            <person name="Sparenborg J."/>
            <person name="Groveman L."/>
            <person name="Halpin R."/>
            <person name="Sitz J."/>
            <person name="Koo H."/>
            <person name="Salzberg S.L."/>
            <person name="Webster R.G."/>
            <person name="Hoffmann E."/>
            <person name="Krauss S."/>
            <person name="Naeve C."/>
            <person name="Bao Y."/>
            <person name="Bolotov P."/>
            <person name="Dernovoy D."/>
            <person name="Kiryutin B."/>
            <person name="Lipman D.J."/>
            <person name="Tatusova T."/>
        </authorList>
    </citation>
    <scope>NUCLEOTIDE SEQUENCE [GENOMIC RNA]</scope>
</reference>
<reference key="2">
    <citation type="submission" date="2007-03" db="EMBL/GenBank/DDBJ databases">
        <authorList>
            <consortium name="The NIAID Influenza Genome Sequencing Consortium"/>
        </authorList>
    </citation>
    <scope>NUCLEOTIDE SEQUENCE [GENOMIC RNA]</scope>
</reference>
<sequence>MDPNTVSSFQDILMRMSKMQLGSSSEDLNGMITQFESLKLYRDSLGEAVMRMGDLHSLQNRNGKWREQLGQKFEEIRWLIEEVRHRLKITENSFEQITFMQALQLLLEVEKEIRTFSFQLI</sequence>
<keyword id="KW-0025">Alternative splicing</keyword>
<keyword id="KW-1048">Host nucleus</keyword>
<keyword id="KW-0945">Host-virus interaction</keyword>
<keyword id="KW-0813">Transport</keyword>
<keyword id="KW-0946">Virion</keyword>
<comment type="function">
    <text evidence="1">Mediates the nuclear export of encapsidated genomic RNAs (ribonucleoproteins, RNPs). Acts as an adapter between viral RNPs complexes and the nuclear export machinery of the cell. Possesses no intrinsic RNA-binding activity, but includes a C-terminal M1-binding domain. This domain is believed to allow recognition of RNPs bound to the protein M1. Since protein M1 is not available in large quantities before late stages of infection, such an indirect recognition mechanism probably ensures that genomic RNPs are not exported from the host nucleus until sufficient quantities of viral mRNA and progeny genomic RNA have been synthesized. Furthermore, the RNPs enter the host cytoplasm only when associated with the M1 protein that is necessary to guide them to the plasma membrane. May down-regulate viral RNA synthesis when overproduced.</text>
</comment>
<comment type="subunit">
    <text evidence="1">Interacts with protein M1. May interact with host nucleoporin RAB/HRB and exportin XPO1/CRM1.</text>
</comment>
<comment type="subcellular location">
    <subcellularLocation>
        <location evidence="1">Virion</location>
    </subcellularLocation>
    <subcellularLocation>
        <location evidence="1">Host nucleus</location>
    </subcellularLocation>
</comment>
<comment type="alternative products">
    <event type="alternative splicing"/>
    <isoform>
        <id>A4GCM4-1</id>
        <name>NEP</name>
        <name>NS2</name>
        <sequence type="displayed"/>
    </isoform>
    <isoform>
        <id>A4GCM5-1</id>
        <name>NS1</name>
        <sequence type="external"/>
    </isoform>
</comment>
<comment type="miscellaneous">
    <text>Average number present in a viral particle is estimated to be 130-200 molecules.</text>
</comment>
<comment type="similarity">
    <text evidence="1">Belongs to the influenza viruses NEP family.</text>
</comment>
<gene>
    <name evidence="1" type="primary">NS</name>
</gene>
<feature type="chain" id="PRO_0000372948" description="Nuclear export protein">
    <location>
        <begin position="1"/>
        <end position="121"/>
    </location>
</feature>
<feature type="short sequence motif" description="Nuclear export signal" evidence="1">
    <location>
        <begin position="12"/>
        <end position="21"/>
    </location>
</feature>
<feature type="short sequence motif" description="Nuclear export signal" evidence="1">
    <location>
        <begin position="85"/>
        <end position="94"/>
    </location>
</feature>